<dbReference type="EC" id="2.1.1.221" evidence="1"/>
<dbReference type="EMBL" id="AK011746">
    <property type="protein sequence ID" value="BAB27815.1"/>
    <property type="molecule type" value="mRNA"/>
</dbReference>
<dbReference type="EMBL" id="AK030465">
    <property type="protein sequence ID" value="BAC26974.1"/>
    <property type="molecule type" value="mRNA"/>
</dbReference>
<dbReference type="EMBL" id="AL772285">
    <property type="protein sequence ID" value="CAM26862.1"/>
    <property type="status" value="ALT_SEQ"/>
    <property type="molecule type" value="Genomic_DNA"/>
</dbReference>
<dbReference type="EMBL" id="AL772285">
    <property type="protein sequence ID" value="CAM26863.1"/>
    <property type="status" value="ALT_SEQ"/>
    <property type="molecule type" value="Genomic_DNA"/>
</dbReference>
<dbReference type="EMBL" id="AL772285">
    <property type="protein sequence ID" value="CAM26864.1"/>
    <property type="molecule type" value="Genomic_DNA"/>
</dbReference>
<dbReference type="EMBL" id="BC019428">
    <property type="protein sequence ID" value="AAH19428.1"/>
    <property type="molecule type" value="mRNA"/>
</dbReference>
<dbReference type="CCDS" id="CCDS18135.1"/>
<dbReference type="RefSeq" id="NP_001406121.1">
    <property type="nucleotide sequence ID" value="NM_001419192.1"/>
</dbReference>
<dbReference type="RefSeq" id="NP_001406122.1">
    <property type="nucleotide sequence ID" value="NM_001419193.1"/>
</dbReference>
<dbReference type="RefSeq" id="NP_001406123.1">
    <property type="nucleotide sequence ID" value="NM_001419194.1"/>
</dbReference>
<dbReference type="RefSeq" id="NP_081542.2">
    <property type="nucleotide sequence ID" value="NM_027266.4"/>
</dbReference>
<dbReference type="RefSeq" id="XP_006538305.1">
    <property type="nucleotide sequence ID" value="XM_006538242.3"/>
</dbReference>
<dbReference type="RefSeq" id="XP_006538306.1">
    <property type="nucleotide sequence ID" value="XM_006538243.3"/>
</dbReference>
<dbReference type="RefSeq" id="XP_006538307.1">
    <property type="nucleotide sequence ID" value="XM_006538244.3"/>
</dbReference>
<dbReference type="SMR" id="Q9D075"/>
<dbReference type="FunCoup" id="Q9D075">
    <property type="interactions" value="2861"/>
</dbReference>
<dbReference type="STRING" id="10090.ENSMUSP00000041052"/>
<dbReference type="iPTMnet" id="Q9D075"/>
<dbReference type="PhosphoSitePlus" id="Q9D075"/>
<dbReference type="PaxDb" id="10090-ENSMUSP00000041052"/>
<dbReference type="ProteomicsDB" id="258900"/>
<dbReference type="Antibodypedia" id="5730">
    <property type="antibodies" value="106 antibodies from 17 providers"/>
</dbReference>
<dbReference type="DNASU" id="69934"/>
<dbReference type="Ensembl" id="ENSMUST00000044673.9">
    <property type="protein sequence ID" value="ENSMUSP00000041052.3"/>
    <property type="gene ID" value="ENSMUSG00000035601.10"/>
</dbReference>
<dbReference type="GeneID" id="69934"/>
<dbReference type="KEGG" id="mmu:69934"/>
<dbReference type="UCSC" id="uc008ssj.1">
    <property type="organism name" value="mouse"/>
</dbReference>
<dbReference type="AGR" id="MGI:1917184"/>
<dbReference type="CTD" id="158234"/>
<dbReference type="MGI" id="MGI:1917184">
    <property type="gene designation" value="Trmt10b"/>
</dbReference>
<dbReference type="VEuPathDB" id="HostDB:ENSMUSG00000035601"/>
<dbReference type="eggNOG" id="KOG2967">
    <property type="taxonomic scope" value="Eukaryota"/>
</dbReference>
<dbReference type="GeneTree" id="ENSGT00530000063169"/>
<dbReference type="InParanoid" id="Q9D075"/>
<dbReference type="OMA" id="ALQAWFP"/>
<dbReference type="OrthoDB" id="278300at2759"/>
<dbReference type="PhylomeDB" id="Q9D075"/>
<dbReference type="TreeFam" id="TF330972"/>
<dbReference type="BioGRID-ORCS" id="69934">
    <property type="hits" value="0 hits in 75 CRISPR screens"/>
</dbReference>
<dbReference type="ChiTaRS" id="Trmt10b">
    <property type="organism name" value="mouse"/>
</dbReference>
<dbReference type="PRO" id="PR:Q9D075"/>
<dbReference type="Proteomes" id="UP000000589">
    <property type="component" value="Chromosome 4"/>
</dbReference>
<dbReference type="RNAct" id="Q9D075">
    <property type="molecule type" value="protein"/>
</dbReference>
<dbReference type="Bgee" id="ENSMUSG00000035601">
    <property type="expression patterns" value="Expressed in animal zygote and 252 other cell types or tissues"/>
</dbReference>
<dbReference type="ExpressionAtlas" id="Q9D075">
    <property type="expression patterns" value="baseline and differential"/>
</dbReference>
<dbReference type="GO" id="GO:0005829">
    <property type="term" value="C:cytosol"/>
    <property type="evidence" value="ECO:0007669"/>
    <property type="project" value="Ensembl"/>
</dbReference>
<dbReference type="GO" id="GO:0042721">
    <property type="term" value="C:TIM22 mitochondrial import inner membrane insertion complex"/>
    <property type="evidence" value="ECO:0007669"/>
    <property type="project" value="Ensembl"/>
</dbReference>
<dbReference type="GO" id="GO:0052905">
    <property type="term" value="F:tRNA (guanosine(9)-N1)-methyltransferase activity"/>
    <property type="evidence" value="ECO:0007669"/>
    <property type="project" value="UniProtKB-EC"/>
</dbReference>
<dbReference type="GO" id="GO:0032259">
    <property type="term" value="P:methylation"/>
    <property type="evidence" value="ECO:0007669"/>
    <property type="project" value="UniProtKB-KW"/>
</dbReference>
<dbReference type="GO" id="GO:0045039">
    <property type="term" value="P:protein insertion into mitochondrial inner membrane"/>
    <property type="evidence" value="ECO:0007669"/>
    <property type="project" value="Ensembl"/>
</dbReference>
<dbReference type="CDD" id="cd18100">
    <property type="entry name" value="Trm10euk_B"/>
    <property type="match status" value="1"/>
</dbReference>
<dbReference type="FunFam" id="3.40.1280.30:FF:000002">
    <property type="entry name" value="tRNA methyltransferase 10 homolog B"/>
    <property type="match status" value="1"/>
</dbReference>
<dbReference type="Gene3D" id="3.40.1280.30">
    <property type="match status" value="1"/>
</dbReference>
<dbReference type="InterPro" id="IPR028564">
    <property type="entry name" value="MT_TRM10-typ"/>
</dbReference>
<dbReference type="InterPro" id="IPR038459">
    <property type="entry name" value="MT_TRM10-typ_sf"/>
</dbReference>
<dbReference type="InterPro" id="IPR047911">
    <property type="entry name" value="Trm10_B_MTase_dom"/>
</dbReference>
<dbReference type="InterPro" id="IPR007356">
    <property type="entry name" value="tRNA_m1G_MeTrfase_euk"/>
</dbReference>
<dbReference type="InterPro" id="IPR016009">
    <property type="entry name" value="tRNA_MeTrfase_TRMD/TRM10"/>
</dbReference>
<dbReference type="PANTHER" id="PTHR13563">
    <property type="entry name" value="TRNA (GUANINE-9-) METHYLTRANSFERASE"/>
    <property type="match status" value="1"/>
</dbReference>
<dbReference type="PANTHER" id="PTHR13563:SF19">
    <property type="entry name" value="TRNA METHYLTRANSFERASE 10 HOMOLOG B"/>
    <property type="match status" value="1"/>
</dbReference>
<dbReference type="Pfam" id="PF01746">
    <property type="entry name" value="tRNA_m1G_MT"/>
    <property type="match status" value="1"/>
</dbReference>
<dbReference type="PROSITE" id="PS51675">
    <property type="entry name" value="SAM_MT_TRM10"/>
    <property type="match status" value="1"/>
</dbReference>
<feature type="chain" id="PRO_0000311322" description="tRNA methyltransferase 10 homolog B">
    <location>
        <begin position="1"/>
        <end position="318"/>
    </location>
</feature>
<feature type="domain" description="SAM-dependent MTase TRM10-type" evidence="3">
    <location>
        <begin position="114"/>
        <end position="311"/>
    </location>
</feature>
<feature type="region of interest" description="Disordered" evidence="4">
    <location>
        <begin position="1"/>
        <end position="105"/>
    </location>
</feature>
<feature type="coiled-coil region" evidence="2">
    <location>
        <begin position="72"/>
        <end position="93"/>
    </location>
</feature>
<feature type="compositionally biased region" description="Basic and acidic residues" evidence="4">
    <location>
        <begin position="1"/>
        <end position="10"/>
    </location>
</feature>
<feature type="compositionally biased region" description="Polar residues" evidence="4">
    <location>
        <begin position="52"/>
        <end position="63"/>
    </location>
</feature>
<feature type="compositionally biased region" description="Basic residues" evidence="4">
    <location>
        <begin position="64"/>
        <end position="83"/>
    </location>
</feature>
<feature type="compositionally biased region" description="Basic and acidic residues" evidence="4">
    <location>
        <begin position="84"/>
        <end position="96"/>
    </location>
</feature>
<feature type="sequence conflict" description="In Ref. 1; BAB27815." evidence="5" ref="1">
    <original>NK</original>
    <variation>KQ</variation>
    <location>
        <begin position="157"/>
        <end position="158"/>
    </location>
</feature>
<sequence length="318" mass="36377">MDCKSEESAQRTDSQAFQEPDGLPEAGGEDGLSESFQLLQVDVEYERPEETSPANSAVWSSKNMQRKQRHWERIVSSKKSKRKQERERRKAKRAEDPGNGTCPQHSKRFLKALTKEKLLEAKHSGPRLCVDLSMTQHMSKKELSRLAGQIRRLYGSNKKASRPFWICLTGFSTASPLYEECLRMNDGFSAYLLDVTEEDCFSLFPLETLVYLTPDSEHSLEDIDQSTVYVIGGLVDESIQKKVTFQKAREYSVKTARLPIQEYMIKRQNEKNYHSEILAINQVFDILSTYFETRNWPEALKKGVSPGKGYVLQNSAEG</sequence>
<name>TM10B_MOUSE</name>
<proteinExistence type="evidence at transcript level"/>
<accession>Q9D075</accession>
<accession>A2AKB5</accession>
<accession>A2AKB6</accession>
<accession>Q8VCR1</accession>
<gene>
    <name type="primary">Trmt10b</name>
    <name type="synonym">Rg9mtd3</name>
</gene>
<reference key="1">
    <citation type="journal article" date="2005" name="Science">
        <title>The transcriptional landscape of the mammalian genome.</title>
        <authorList>
            <person name="Carninci P."/>
            <person name="Kasukawa T."/>
            <person name="Katayama S."/>
            <person name="Gough J."/>
            <person name="Frith M.C."/>
            <person name="Maeda N."/>
            <person name="Oyama R."/>
            <person name="Ravasi T."/>
            <person name="Lenhard B."/>
            <person name="Wells C."/>
            <person name="Kodzius R."/>
            <person name="Shimokawa K."/>
            <person name="Bajic V.B."/>
            <person name="Brenner S.E."/>
            <person name="Batalov S."/>
            <person name="Forrest A.R."/>
            <person name="Zavolan M."/>
            <person name="Davis M.J."/>
            <person name="Wilming L.G."/>
            <person name="Aidinis V."/>
            <person name="Allen J.E."/>
            <person name="Ambesi-Impiombato A."/>
            <person name="Apweiler R."/>
            <person name="Aturaliya R.N."/>
            <person name="Bailey T.L."/>
            <person name="Bansal M."/>
            <person name="Baxter L."/>
            <person name="Beisel K.W."/>
            <person name="Bersano T."/>
            <person name="Bono H."/>
            <person name="Chalk A.M."/>
            <person name="Chiu K.P."/>
            <person name="Choudhary V."/>
            <person name="Christoffels A."/>
            <person name="Clutterbuck D.R."/>
            <person name="Crowe M.L."/>
            <person name="Dalla E."/>
            <person name="Dalrymple B.P."/>
            <person name="de Bono B."/>
            <person name="Della Gatta G."/>
            <person name="di Bernardo D."/>
            <person name="Down T."/>
            <person name="Engstrom P."/>
            <person name="Fagiolini M."/>
            <person name="Faulkner G."/>
            <person name="Fletcher C.F."/>
            <person name="Fukushima T."/>
            <person name="Furuno M."/>
            <person name="Futaki S."/>
            <person name="Gariboldi M."/>
            <person name="Georgii-Hemming P."/>
            <person name="Gingeras T.R."/>
            <person name="Gojobori T."/>
            <person name="Green R.E."/>
            <person name="Gustincich S."/>
            <person name="Harbers M."/>
            <person name="Hayashi Y."/>
            <person name="Hensch T.K."/>
            <person name="Hirokawa N."/>
            <person name="Hill D."/>
            <person name="Huminiecki L."/>
            <person name="Iacono M."/>
            <person name="Ikeo K."/>
            <person name="Iwama A."/>
            <person name="Ishikawa T."/>
            <person name="Jakt M."/>
            <person name="Kanapin A."/>
            <person name="Katoh M."/>
            <person name="Kawasawa Y."/>
            <person name="Kelso J."/>
            <person name="Kitamura H."/>
            <person name="Kitano H."/>
            <person name="Kollias G."/>
            <person name="Krishnan S.P."/>
            <person name="Kruger A."/>
            <person name="Kummerfeld S.K."/>
            <person name="Kurochkin I.V."/>
            <person name="Lareau L.F."/>
            <person name="Lazarevic D."/>
            <person name="Lipovich L."/>
            <person name="Liu J."/>
            <person name="Liuni S."/>
            <person name="McWilliam S."/>
            <person name="Madan Babu M."/>
            <person name="Madera M."/>
            <person name="Marchionni L."/>
            <person name="Matsuda H."/>
            <person name="Matsuzawa S."/>
            <person name="Miki H."/>
            <person name="Mignone F."/>
            <person name="Miyake S."/>
            <person name="Morris K."/>
            <person name="Mottagui-Tabar S."/>
            <person name="Mulder N."/>
            <person name="Nakano N."/>
            <person name="Nakauchi H."/>
            <person name="Ng P."/>
            <person name="Nilsson R."/>
            <person name="Nishiguchi S."/>
            <person name="Nishikawa S."/>
            <person name="Nori F."/>
            <person name="Ohara O."/>
            <person name="Okazaki Y."/>
            <person name="Orlando V."/>
            <person name="Pang K.C."/>
            <person name="Pavan W.J."/>
            <person name="Pavesi G."/>
            <person name="Pesole G."/>
            <person name="Petrovsky N."/>
            <person name="Piazza S."/>
            <person name="Reed J."/>
            <person name="Reid J.F."/>
            <person name="Ring B.Z."/>
            <person name="Ringwald M."/>
            <person name="Rost B."/>
            <person name="Ruan Y."/>
            <person name="Salzberg S.L."/>
            <person name="Sandelin A."/>
            <person name="Schneider C."/>
            <person name="Schoenbach C."/>
            <person name="Sekiguchi K."/>
            <person name="Semple C.A."/>
            <person name="Seno S."/>
            <person name="Sessa L."/>
            <person name="Sheng Y."/>
            <person name="Shibata Y."/>
            <person name="Shimada H."/>
            <person name="Shimada K."/>
            <person name="Silva D."/>
            <person name="Sinclair B."/>
            <person name="Sperling S."/>
            <person name="Stupka E."/>
            <person name="Sugiura K."/>
            <person name="Sultana R."/>
            <person name="Takenaka Y."/>
            <person name="Taki K."/>
            <person name="Tammoja K."/>
            <person name="Tan S.L."/>
            <person name="Tang S."/>
            <person name="Taylor M.S."/>
            <person name="Tegner J."/>
            <person name="Teichmann S.A."/>
            <person name="Ueda H.R."/>
            <person name="van Nimwegen E."/>
            <person name="Verardo R."/>
            <person name="Wei C.L."/>
            <person name="Yagi K."/>
            <person name="Yamanishi H."/>
            <person name="Zabarovsky E."/>
            <person name="Zhu S."/>
            <person name="Zimmer A."/>
            <person name="Hide W."/>
            <person name="Bult C."/>
            <person name="Grimmond S.M."/>
            <person name="Teasdale R.D."/>
            <person name="Liu E.T."/>
            <person name="Brusic V."/>
            <person name="Quackenbush J."/>
            <person name="Wahlestedt C."/>
            <person name="Mattick J.S."/>
            <person name="Hume D.A."/>
            <person name="Kai C."/>
            <person name="Sasaki D."/>
            <person name="Tomaru Y."/>
            <person name="Fukuda S."/>
            <person name="Kanamori-Katayama M."/>
            <person name="Suzuki M."/>
            <person name="Aoki J."/>
            <person name="Arakawa T."/>
            <person name="Iida J."/>
            <person name="Imamura K."/>
            <person name="Itoh M."/>
            <person name="Kato T."/>
            <person name="Kawaji H."/>
            <person name="Kawagashira N."/>
            <person name="Kawashima T."/>
            <person name="Kojima M."/>
            <person name="Kondo S."/>
            <person name="Konno H."/>
            <person name="Nakano K."/>
            <person name="Ninomiya N."/>
            <person name="Nishio T."/>
            <person name="Okada M."/>
            <person name="Plessy C."/>
            <person name="Shibata K."/>
            <person name="Shiraki T."/>
            <person name="Suzuki S."/>
            <person name="Tagami M."/>
            <person name="Waki K."/>
            <person name="Watahiki A."/>
            <person name="Okamura-Oho Y."/>
            <person name="Suzuki H."/>
            <person name="Kawai J."/>
            <person name="Hayashizaki Y."/>
        </authorList>
    </citation>
    <scope>NUCLEOTIDE SEQUENCE [LARGE SCALE MRNA]</scope>
    <source>
        <strain>C57BL/6J</strain>
        <tissue>Pituitary</tissue>
    </source>
</reference>
<reference key="2">
    <citation type="journal article" date="2009" name="PLoS Biol.">
        <title>Lineage-specific biology revealed by a finished genome assembly of the mouse.</title>
        <authorList>
            <person name="Church D.M."/>
            <person name="Goodstadt L."/>
            <person name="Hillier L.W."/>
            <person name="Zody M.C."/>
            <person name="Goldstein S."/>
            <person name="She X."/>
            <person name="Bult C.J."/>
            <person name="Agarwala R."/>
            <person name="Cherry J.L."/>
            <person name="DiCuccio M."/>
            <person name="Hlavina W."/>
            <person name="Kapustin Y."/>
            <person name="Meric P."/>
            <person name="Maglott D."/>
            <person name="Birtle Z."/>
            <person name="Marques A.C."/>
            <person name="Graves T."/>
            <person name="Zhou S."/>
            <person name="Teague B."/>
            <person name="Potamousis K."/>
            <person name="Churas C."/>
            <person name="Place M."/>
            <person name="Herschleb J."/>
            <person name="Runnheim R."/>
            <person name="Forrest D."/>
            <person name="Amos-Landgraf J."/>
            <person name="Schwartz D.C."/>
            <person name="Cheng Z."/>
            <person name="Lindblad-Toh K."/>
            <person name="Eichler E.E."/>
            <person name="Ponting C.P."/>
        </authorList>
    </citation>
    <scope>NUCLEOTIDE SEQUENCE [LARGE SCALE GENOMIC DNA]</scope>
    <source>
        <strain>C57BL/6J</strain>
    </source>
</reference>
<reference key="3">
    <citation type="journal article" date="2004" name="Genome Res.">
        <title>The status, quality, and expansion of the NIH full-length cDNA project: the Mammalian Gene Collection (MGC).</title>
        <authorList>
            <consortium name="The MGC Project Team"/>
        </authorList>
    </citation>
    <scope>NUCLEOTIDE SEQUENCE [LARGE SCALE MRNA]</scope>
    <source>
        <strain>FVB/N</strain>
        <tissue>Colon</tissue>
    </source>
</reference>
<keyword id="KW-0175">Coiled coil</keyword>
<keyword id="KW-0489">Methyltransferase</keyword>
<keyword id="KW-1185">Reference proteome</keyword>
<keyword id="KW-0949">S-adenosyl-L-methionine</keyword>
<keyword id="KW-0808">Transferase</keyword>
<evidence type="ECO:0000250" key="1">
    <source>
        <dbReference type="UniProtKB" id="Q6PF06"/>
    </source>
</evidence>
<evidence type="ECO:0000255" key="2"/>
<evidence type="ECO:0000255" key="3">
    <source>
        <dbReference type="PROSITE-ProRule" id="PRU01012"/>
    </source>
</evidence>
<evidence type="ECO:0000256" key="4">
    <source>
        <dbReference type="SAM" id="MobiDB-lite"/>
    </source>
</evidence>
<evidence type="ECO:0000305" key="5"/>
<protein>
    <recommendedName>
        <fullName>tRNA methyltransferase 10 homolog B</fullName>
        <ecNumber evidence="1">2.1.1.221</ecNumber>
    </recommendedName>
    <alternativeName>
        <fullName>RNA (guanine-9-)-methyltransferase domain-containing protein 3</fullName>
    </alternativeName>
    <alternativeName>
        <fullName>tRNA (guanine(9)-N(1))-methyltransferase TRMT10B</fullName>
    </alternativeName>
</protein>
<organism>
    <name type="scientific">Mus musculus</name>
    <name type="common">Mouse</name>
    <dbReference type="NCBI Taxonomy" id="10090"/>
    <lineage>
        <taxon>Eukaryota</taxon>
        <taxon>Metazoa</taxon>
        <taxon>Chordata</taxon>
        <taxon>Craniata</taxon>
        <taxon>Vertebrata</taxon>
        <taxon>Euteleostomi</taxon>
        <taxon>Mammalia</taxon>
        <taxon>Eutheria</taxon>
        <taxon>Euarchontoglires</taxon>
        <taxon>Glires</taxon>
        <taxon>Rodentia</taxon>
        <taxon>Myomorpha</taxon>
        <taxon>Muroidea</taxon>
        <taxon>Muridae</taxon>
        <taxon>Murinae</taxon>
        <taxon>Mus</taxon>
        <taxon>Mus</taxon>
    </lineage>
</organism>
<comment type="function">
    <text evidence="1">S-adenosyl-L-methionine-dependent guanine N(1)-methyltransferase that catalyzes the formation of N(1)-methylguanine at position 9 (m1G9) in tRNAs. Probably not able to catalyze formation of N(1)-methyladenine at position 9 (m1A9) in tRNAs.</text>
</comment>
<comment type="catalytic activity">
    <reaction evidence="1">
        <text>guanosine(9) in tRNA + S-adenosyl-L-methionine = N(1)-methylguanosine(9) in tRNA + S-adenosyl-L-homocysteine + H(+)</text>
        <dbReference type="Rhea" id="RHEA:43156"/>
        <dbReference type="Rhea" id="RHEA-COMP:10367"/>
        <dbReference type="Rhea" id="RHEA-COMP:10368"/>
        <dbReference type="ChEBI" id="CHEBI:15378"/>
        <dbReference type="ChEBI" id="CHEBI:57856"/>
        <dbReference type="ChEBI" id="CHEBI:59789"/>
        <dbReference type="ChEBI" id="CHEBI:73542"/>
        <dbReference type="ChEBI" id="CHEBI:74269"/>
        <dbReference type="EC" id="2.1.1.221"/>
    </reaction>
</comment>
<comment type="similarity">
    <text evidence="3">Belongs to the class IV-like SAM-binding methyltransferase superfamily. TRM10 family.</text>
</comment>
<comment type="sequence caution" evidence="5">
    <conflict type="erroneous gene model prediction">
        <sequence resource="EMBL-CDS" id="CAM26862"/>
    </conflict>
</comment>
<comment type="sequence caution" evidence="5">
    <conflict type="erroneous gene model prediction">
        <sequence resource="EMBL-CDS" id="CAM26863"/>
    </conflict>
</comment>